<gene>
    <name type="ordered locus">SAOUHSC_01719</name>
</gene>
<accession>Q2FXW2</accession>
<comment type="similarity">
    <text evidence="1">Belongs to the UPF0473 family.</text>
</comment>
<evidence type="ECO:0000305" key="1"/>
<protein>
    <recommendedName>
        <fullName>UPF0473 protein SAOUHSC_01719</fullName>
    </recommendedName>
</protein>
<keyword id="KW-1185">Reference proteome</keyword>
<proteinExistence type="inferred from homology"/>
<sequence>MTEHNHDSQLEINNEEELLTLFDEEGNEVLYRKVLEFYHPEFKKEYVILAEEGAQSDEDDMIELVPMINEPDESGDGGKLVPIETDEEWDMIEEVVNTEMEE</sequence>
<dbReference type="EMBL" id="CP000253">
    <property type="protein sequence ID" value="ABD30792.1"/>
    <property type="molecule type" value="Genomic_DNA"/>
</dbReference>
<dbReference type="RefSeq" id="WP_000134779.1">
    <property type="nucleotide sequence ID" value="NZ_LS483365.1"/>
</dbReference>
<dbReference type="RefSeq" id="YP_500228.1">
    <property type="nucleotide sequence ID" value="NC_007795.1"/>
</dbReference>
<dbReference type="STRING" id="93061.SAOUHSC_01719"/>
<dbReference type="PaxDb" id="1280-SAXN108_1643"/>
<dbReference type="GeneID" id="3921108"/>
<dbReference type="KEGG" id="sao:SAOUHSC_01719"/>
<dbReference type="PATRIC" id="fig|93061.5.peg.1567"/>
<dbReference type="eggNOG" id="COG3906">
    <property type="taxonomic scope" value="Bacteria"/>
</dbReference>
<dbReference type="HOGENOM" id="CLU_146610_2_1_9"/>
<dbReference type="OrthoDB" id="2086132at2"/>
<dbReference type="PRO" id="PR:Q2FXW2"/>
<dbReference type="Proteomes" id="UP000008816">
    <property type="component" value="Chromosome"/>
</dbReference>
<dbReference type="HAMAP" id="MF_01448">
    <property type="entry name" value="UPF0473"/>
    <property type="match status" value="1"/>
</dbReference>
<dbReference type="InterPro" id="IPR009711">
    <property type="entry name" value="UPF0473"/>
</dbReference>
<dbReference type="NCBIfam" id="NF010214">
    <property type="entry name" value="PRK13678.1-1"/>
    <property type="match status" value="1"/>
</dbReference>
<dbReference type="PANTHER" id="PTHR40066">
    <property type="entry name" value="UPF0473 PROTEIN CBO2561/CLC_2432"/>
    <property type="match status" value="1"/>
</dbReference>
<dbReference type="PANTHER" id="PTHR40066:SF1">
    <property type="entry name" value="UPF0473 PROTEIN CBO2561_CLC_2432"/>
    <property type="match status" value="1"/>
</dbReference>
<dbReference type="Pfam" id="PF06949">
    <property type="entry name" value="DUF1292"/>
    <property type="match status" value="1"/>
</dbReference>
<reference key="1">
    <citation type="book" date="2006" name="Gram positive pathogens, 2nd edition">
        <title>The Staphylococcus aureus NCTC 8325 genome.</title>
        <editorList>
            <person name="Fischetti V."/>
            <person name="Novick R."/>
            <person name="Ferretti J."/>
            <person name="Portnoy D."/>
            <person name="Rood J."/>
        </editorList>
        <authorList>
            <person name="Gillaspy A.F."/>
            <person name="Worrell V."/>
            <person name="Orvis J."/>
            <person name="Roe B.A."/>
            <person name="Dyer D.W."/>
            <person name="Iandolo J.J."/>
        </authorList>
    </citation>
    <scope>NUCLEOTIDE SEQUENCE [LARGE SCALE GENOMIC DNA]</scope>
    <source>
        <strain>NCTC 8325 / PS 47</strain>
    </source>
</reference>
<name>Y1719_STAA8</name>
<organism>
    <name type="scientific">Staphylococcus aureus (strain NCTC 8325 / PS 47)</name>
    <dbReference type="NCBI Taxonomy" id="93061"/>
    <lineage>
        <taxon>Bacteria</taxon>
        <taxon>Bacillati</taxon>
        <taxon>Bacillota</taxon>
        <taxon>Bacilli</taxon>
        <taxon>Bacillales</taxon>
        <taxon>Staphylococcaceae</taxon>
        <taxon>Staphylococcus</taxon>
    </lineage>
</organism>
<feature type="chain" id="PRO_0000299288" description="UPF0473 protein SAOUHSC_01719">
    <location>
        <begin position="1"/>
        <end position="102"/>
    </location>
</feature>